<reference evidence="7" key="1">
    <citation type="journal article" date="2014" name="Fish Physiol. Biochem.">
        <title>Teleost fish osteocalcin 1 and 2 share the ability to bind the calcium mineral phase.</title>
        <authorList>
            <person name="Cavaco S."/>
            <person name="Williamson M.K."/>
            <person name="Rosa J."/>
            <person name="Roberto V."/>
            <person name="Cordeiro O."/>
            <person name="Price P.A."/>
            <person name="Leonor Cancela M."/>
            <person name="Laize V."/>
            <person name="Simes D.C."/>
        </authorList>
    </citation>
    <scope>NUCLEOTIDE SEQUENCE [GENOMIC DNA]</scope>
    <scope>IDENTIFICATION [MRNA]</scope>
    <scope>PROTEIN SEQUENCE OF 116-128</scope>
    <source>
        <tissue evidence="6">Bone</tissue>
    </source>
</reference>
<reference evidence="10" key="2">
    <citation type="journal article" date="2014" name="Nat. Commun.">
        <title>The rainbow trout genome provides novel insights into evolution after whole-genome duplication in vertebrates.</title>
        <authorList>
            <person name="Berthelot C."/>
            <person name="Brunet F."/>
            <person name="Chalopin D."/>
            <person name="Juanchich A."/>
            <person name="Bernard M."/>
            <person name="Noel B."/>
            <person name="Bento P."/>
            <person name="Da Silva C."/>
            <person name="Labadie K."/>
            <person name="Alberti A."/>
            <person name="Aury J.M."/>
            <person name="Louis A."/>
            <person name="Dehais P."/>
            <person name="Bardou P."/>
            <person name="Montfort J."/>
            <person name="Klopp C."/>
            <person name="Cabau C."/>
            <person name="Gaspin C."/>
            <person name="Thorgaard G.H."/>
            <person name="Boussaha M."/>
            <person name="Quillet E."/>
            <person name="Guyomard R."/>
            <person name="Galiana D."/>
            <person name="Bobe J."/>
            <person name="Volff J.N."/>
            <person name="Genet C."/>
            <person name="Wincker P."/>
            <person name="Jaillon O."/>
            <person name="Roest Crollius H."/>
            <person name="Guiguen Y."/>
        </authorList>
    </citation>
    <scope>NUCLEOTIDE SEQUENCE [LARGE SCALE GENOMIC DNA]</scope>
</reference>
<gene>
    <name evidence="10" type="ORF">GSONMT00015798001</name>
</gene>
<comment type="function">
    <text evidence="7">Binds strongly to apatite and calcium.</text>
</comment>
<comment type="subcellular location">
    <subcellularLocation>
        <location evidence="7">Secreted</location>
    </subcellularLocation>
</comment>
<comment type="PTM">
    <text evidence="4">Gamma-carboxyglutamate residues are formed by vitamin K dependent carboxylation. These residues are essential for the binding of calcium.</text>
</comment>
<comment type="similarity">
    <text evidence="7">Belongs to the osteocalcin/matrix Gla protein family.</text>
</comment>
<protein>
    <recommendedName>
        <fullName evidence="9">Osteocalcin 2b</fullName>
        <shortName evidence="6">OmyOC2b</shortName>
    </recommendedName>
    <alternativeName>
        <fullName evidence="6">Bone Gla protein</fullName>
        <shortName evidence="2">BGP</shortName>
    </alternativeName>
    <alternativeName>
        <fullName evidence="2">Gamma-carboxyglutamic acid-containing protein</fullName>
    </alternativeName>
</protein>
<name>OST2B_ONCMY</name>
<organism evidence="9">
    <name type="scientific">Oncorhynchus mykiss</name>
    <name type="common">Rainbow trout</name>
    <name type="synonym">Salmo gairdneri</name>
    <dbReference type="NCBI Taxonomy" id="8022"/>
    <lineage>
        <taxon>Eukaryota</taxon>
        <taxon>Metazoa</taxon>
        <taxon>Chordata</taxon>
        <taxon>Craniata</taxon>
        <taxon>Vertebrata</taxon>
        <taxon>Euteleostomi</taxon>
        <taxon>Actinopterygii</taxon>
        <taxon>Neopterygii</taxon>
        <taxon>Teleostei</taxon>
        <taxon>Protacanthopterygii</taxon>
        <taxon>Salmoniformes</taxon>
        <taxon>Salmonidae</taxon>
        <taxon>Salmoninae</taxon>
        <taxon>Oncorhynchus</taxon>
    </lineage>
</organism>
<keyword id="KW-0091">Biomineralization</keyword>
<keyword id="KW-0106">Calcium</keyword>
<keyword id="KW-0903">Direct protein sequencing</keyword>
<keyword id="KW-1015">Disulfide bond</keyword>
<keyword id="KW-0301">Gamma-carboxyglutamic acid</keyword>
<keyword id="KW-0479">Metal-binding</keyword>
<keyword id="KW-1185">Reference proteome</keyword>
<keyword id="KW-0964">Secreted</keyword>
<keyword id="KW-0732">Signal</keyword>
<dbReference type="EMBL" id="BK006866">
    <property type="protein sequence ID" value="DAA64604.1"/>
    <property type="molecule type" value="mRNA"/>
</dbReference>
<dbReference type="EMBL" id="GQ241719">
    <property type="protein sequence ID" value="ACS32164.1"/>
    <property type="molecule type" value="Genomic_DNA"/>
</dbReference>
<dbReference type="EMBL" id="FR905655">
    <property type="protein sequence ID" value="CDQ80774.1"/>
    <property type="molecule type" value="Genomic_DNA"/>
</dbReference>
<dbReference type="SMR" id="K9J977"/>
<dbReference type="STRING" id="8022.K9J977"/>
<dbReference type="PaxDb" id="8022-K9J977"/>
<dbReference type="Proteomes" id="UP000193380">
    <property type="component" value="Unassembled WGS sequence"/>
</dbReference>
<dbReference type="Proteomes" id="UP000694395">
    <property type="component" value="Unplaced"/>
</dbReference>
<dbReference type="GO" id="GO:0005576">
    <property type="term" value="C:extracellular region"/>
    <property type="evidence" value="ECO:0007669"/>
    <property type="project" value="UniProtKB-SubCell"/>
</dbReference>
<dbReference type="GO" id="GO:0005509">
    <property type="term" value="F:calcium ion binding"/>
    <property type="evidence" value="ECO:0007669"/>
    <property type="project" value="InterPro"/>
</dbReference>
<dbReference type="GO" id="GO:0046848">
    <property type="term" value="F:hydroxyapatite binding"/>
    <property type="evidence" value="ECO:0007669"/>
    <property type="project" value="TreeGrafter"/>
</dbReference>
<dbReference type="GO" id="GO:0008147">
    <property type="term" value="F:structural constituent of bone"/>
    <property type="evidence" value="ECO:0007669"/>
    <property type="project" value="TreeGrafter"/>
</dbReference>
<dbReference type="GO" id="GO:0031214">
    <property type="term" value="P:biomineral tissue development"/>
    <property type="evidence" value="ECO:0007669"/>
    <property type="project" value="UniProtKB-KW"/>
</dbReference>
<dbReference type="GO" id="GO:0060348">
    <property type="term" value="P:bone development"/>
    <property type="evidence" value="ECO:0007669"/>
    <property type="project" value="InterPro"/>
</dbReference>
<dbReference type="GO" id="GO:0001649">
    <property type="term" value="P:osteoblast differentiation"/>
    <property type="evidence" value="ECO:0007669"/>
    <property type="project" value="TreeGrafter"/>
</dbReference>
<dbReference type="GO" id="GO:1900076">
    <property type="term" value="P:regulation of cellular response to insulin stimulus"/>
    <property type="evidence" value="ECO:0007669"/>
    <property type="project" value="InterPro"/>
</dbReference>
<dbReference type="GO" id="GO:0032571">
    <property type="term" value="P:response to vitamin K"/>
    <property type="evidence" value="ECO:0007669"/>
    <property type="project" value="InterPro"/>
</dbReference>
<dbReference type="InterPro" id="IPR035972">
    <property type="entry name" value="GLA-like_dom_SF"/>
</dbReference>
<dbReference type="InterPro" id="IPR000294">
    <property type="entry name" value="GLA_domain"/>
</dbReference>
<dbReference type="InterPro" id="IPR039176">
    <property type="entry name" value="Osteocalcin"/>
</dbReference>
<dbReference type="PANTHER" id="PTHR14235">
    <property type="entry name" value="OSTEOCALCIN"/>
    <property type="match status" value="1"/>
</dbReference>
<dbReference type="PANTHER" id="PTHR14235:SF0">
    <property type="entry name" value="OSTEOCALCIN"/>
    <property type="match status" value="1"/>
</dbReference>
<dbReference type="SUPFAM" id="SSF57630">
    <property type="entry name" value="GLA-domain"/>
    <property type="match status" value="1"/>
</dbReference>
<dbReference type="PROSITE" id="PS50998">
    <property type="entry name" value="GLA_2"/>
    <property type="match status" value="1"/>
</dbReference>
<accession>K9J977</accession>
<accession>P86868</accession>
<feature type="signal peptide" evidence="3">
    <location>
        <begin position="1"/>
        <end position="18"/>
    </location>
</feature>
<feature type="propeptide" id="PRO_0000436922" evidence="8">
    <location>
        <begin position="19"/>
        <end position="115"/>
    </location>
</feature>
<feature type="chain" id="PRO_5005921925" description="Osteocalcin 2b" evidence="7">
    <location>
        <begin position="116"/>
        <end position="164"/>
    </location>
</feature>
<feature type="domain" description="Gla" evidence="4">
    <location>
        <begin position="128"/>
        <end position="160"/>
    </location>
</feature>
<feature type="region of interest" description="Disordered" evidence="5">
    <location>
        <begin position="30"/>
        <end position="99"/>
    </location>
</feature>
<feature type="compositionally biased region" description="Low complexity" evidence="5">
    <location>
        <begin position="30"/>
        <end position="95"/>
    </location>
</feature>
<feature type="binding site" evidence="1">
    <location>
        <position position="130"/>
    </location>
    <ligand>
        <name>Ca(2+)</name>
        <dbReference type="ChEBI" id="CHEBI:29108"/>
        <label>1</label>
    </ligand>
</feature>
<feature type="binding site" evidence="1">
    <location>
        <position position="134"/>
    </location>
    <ligand>
        <name>Ca(2+)</name>
        <dbReference type="ChEBI" id="CHEBI:29108"/>
        <label>2</label>
    </ligand>
</feature>
<feature type="binding site" evidence="1">
    <location>
        <position position="137"/>
    </location>
    <ligand>
        <name>Ca(2+)</name>
        <dbReference type="ChEBI" id="CHEBI:29108"/>
        <label>2</label>
    </ligand>
</feature>
<feature type="binding site" evidence="1">
    <location>
        <position position="137"/>
    </location>
    <ligand>
        <name>Ca(2+)</name>
        <dbReference type="ChEBI" id="CHEBI:29108"/>
        <label>3</label>
    </ligand>
</feature>
<feature type="modified residue" description="4-carboxyglutamate" evidence="2">
    <location>
        <position position="130"/>
    </location>
</feature>
<feature type="modified residue" description="4-carboxyglutamate" evidence="4">
    <location>
        <position position="134"/>
    </location>
</feature>
<feature type="modified residue" description="4-carboxyglutamate" evidence="4">
    <location>
        <position position="137"/>
    </location>
</feature>
<feature type="disulfide bond" evidence="4">
    <location>
        <begin position="136"/>
        <end position="142"/>
    </location>
</feature>
<sequence>MKSLTLLTICAVLSVSLSMNDLALDVVLDPDPAAEPAPAADSSASSSASSSSSSASDSSASASDSSDSDSSSSSSSSSSSESASAEAMAEDPAAATEPEVIMKRDLASVLLRRKRAAGPAAAAFTLTQVESLSEVCELNLACEHMAETAGIVAAYTAYYGPPPF</sequence>
<evidence type="ECO:0000250" key="1">
    <source>
        <dbReference type="UniProtKB" id="P02820"/>
    </source>
</evidence>
<evidence type="ECO:0000250" key="2">
    <source>
        <dbReference type="UniProtKB" id="Q800Y1"/>
    </source>
</evidence>
<evidence type="ECO:0000255" key="3"/>
<evidence type="ECO:0000255" key="4">
    <source>
        <dbReference type="PROSITE-ProRule" id="PRU00463"/>
    </source>
</evidence>
<evidence type="ECO:0000256" key="5">
    <source>
        <dbReference type="SAM" id="MobiDB-lite"/>
    </source>
</evidence>
<evidence type="ECO:0000303" key="6">
    <source>
    </source>
</evidence>
<evidence type="ECO:0000305" key="7"/>
<evidence type="ECO:0000305" key="8">
    <source>
    </source>
</evidence>
<evidence type="ECO:0000312" key="9">
    <source>
        <dbReference type="EMBL" id="ACS32164.1"/>
    </source>
</evidence>
<evidence type="ECO:0000312" key="10">
    <source>
        <dbReference type="EMBL" id="CDQ80774.1"/>
    </source>
</evidence>
<proteinExistence type="evidence at protein level"/>